<keyword id="KW-0030">Aminoacyl-tRNA synthetase</keyword>
<keyword id="KW-0067">ATP-binding</keyword>
<keyword id="KW-0963">Cytoplasm</keyword>
<keyword id="KW-0436">Ligase</keyword>
<keyword id="KW-0547">Nucleotide-binding</keyword>
<keyword id="KW-0648">Protein biosynthesis</keyword>
<keyword id="KW-1185">Reference proteome</keyword>
<comment type="function">
    <text evidence="1">Catalyzes the attachment of tryptophan to tRNA(Trp).</text>
</comment>
<comment type="catalytic activity">
    <reaction evidence="1">
        <text>tRNA(Trp) + L-tryptophan + ATP = L-tryptophyl-tRNA(Trp) + AMP + diphosphate + H(+)</text>
        <dbReference type="Rhea" id="RHEA:24080"/>
        <dbReference type="Rhea" id="RHEA-COMP:9671"/>
        <dbReference type="Rhea" id="RHEA-COMP:9705"/>
        <dbReference type="ChEBI" id="CHEBI:15378"/>
        <dbReference type="ChEBI" id="CHEBI:30616"/>
        <dbReference type="ChEBI" id="CHEBI:33019"/>
        <dbReference type="ChEBI" id="CHEBI:57912"/>
        <dbReference type="ChEBI" id="CHEBI:78442"/>
        <dbReference type="ChEBI" id="CHEBI:78535"/>
        <dbReference type="ChEBI" id="CHEBI:456215"/>
        <dbReference type="EC" id="6.1.1.2"/>
    </reaction>
</comment>
<comment type="subunit">
    <text evidence="1">Homodimer.</text>
</comment>
<comment type="subcellular location">
    <subcellularLocation>
        <location evidence="1">Cytoplasm</location>
    </subcellularLocation>
</comment>
<comment type="similarity">
    <text evidence="1">Belongs to the class-I aminoacyl-tRNA synthetase family.</text>
</comment>
<feature type="chain" id="PRO_0000136696" description="Tryptophan--tRNA ligase">
    <location>
        <begin position="1"/>
        <end position="330"/>
    </location>
</feature>
<feature type="short sequence motif" description="'HIGH' region" evidence="1">
    <location>
        <begin position="7"/>
        <end position="15"/>
    </location>
</feature>
<feature type="short sequence motif" description="'KMSKS' region" evidence="1">
    <location>
        <begin position="194"/>
        <end position="198"/>
    </location>
</feature>
<feature type="binding site" evidence="1">
    <location>
        <begin position="6"/>
        <end position="8"/>
    </location>
    <ligand>
        <name>ATP</name>
        <dbReference type="ChEBI" id="CHEBI:30616"/>
    </ligand>
</feature>
<feature type="binding site" evidence="1">
    <location>
        <begin position="14"/>
        <end position="15"/>
    </location>
    <ligand>
        <name>ATP</name>
        <dbReference type="ChEBI" id="CHEBI:30616"/>
    </ligand>
</feature>
<feature type="binding site" evidence="1">
    <location>
        <position position="130"/>
    </location>
    <ligand>
        <name>L-tryptophan</name>
        <dbReference type="ChEBI" id="CHEBI:57912"/>
    </ligand>
</feature>
<feature type="binding site" evidence="1">
    <location>
        <begin position="142"/>
        <end position="144"/>
    </location>
    <ligand>
        <name>ATP</name>
        <dbReference type="ChEBI" id="CHEBI:30616"/>
    </ligand>
</feature>
<feature type="binding site" evidence="1">
    <location>
        <position position="185"/>
    </location>
    <ligand>
        <name>ATP</name>
        <dbReference type="ChEBI" id="CHEBI:30616"/>
    </ligand>
</feature>
<feature type="binding site" evidence="1">
    <location>
        <begin position="194"/>
        <end position="198"/>
    </location>
    <ligand>
        <name>ATP</name>
        <dbReference type="ChEBI" id="CHEBI:30616"/>
    </ligand>
</feature>
<organism>
    <name type="scientific">Thermosynechococcus vestitus (strain NIES-2133 / IAM M-273 / BP-1)</name>
    <dbReference type="NCBI Taxonomy" id="197221"/>
    <lineage>
        <taxon>Bacteria</taxon>
        <taxon>Bacillati</taxon>
        <taxon>Cyanobacteriota</taxon>
        <taxon>Cyanophyceae</taxon>
        <taxon>Acaryochloridales</taxon>
        <taxon>Thermosynechococcaceae</taxon>
        <taxon>Thermosynechococcus</taxon>
    </lineage>
</organism>
<dbReference type="EC" id="6.1.1.2" evidence="1"/>
<dbReference type="EMBL" id="BA000039">
    <property type="protein sequence ID" value="BAC09548.1"/>
    <property type="molecule type" value="Genomic_DNA"/>
</dbReference>
<dbReference type="RefSeq" id="NP_682786.2">
    <property type="nucleotide sequence ID" value="NC_004113.1"/>
</dbReference>
<dbReference type="SMR" id="Q8DHG3"/>
<dbReference type="STRING" id="197221.gene:10748604"/>
<dbReference type="EnsemblBacteria" id="BAC09548">
    <property type="protein sequence ID" value="BAC09548"/>
    <property type="gene ID" value="BAC09548"/>
</dbReference>
<dbReference type="KEGG" id="tel:tlr1996"/>
<dbReference type="PATRIC" id="fig|197221.4.peg.2087"/>
<dbReference type="eggNOG" id="COG0180">
    <property type="taxonomic scope" value="Bacteria"/>
</dbReference>
<dbReference type="Proteomes" id="UP000000440">
    <property type="component" value="Chromosome"/>
</dbReference>
<dbReference type="GO" id="GO:0005737">
    <property type="term" value="C:cytoplasm"/>
    <property type="evidence" value="ECO:0007669"/>
    <property type="project" value="UniProtKB-SubCell"/>
</dbReference>
<dbReference type="GO" id="GO:0005524">
    <property type="term" value="F:ATP binding"/>
    <property type="evidence" value="ECO:0007669"/>
    <property type="project" value="UniProtKB-UniRule"/>
</dbReference>
<dbReference type="GO" id="GO:0004830">
    <property type="term" value="F:tryptophan-tRNA ligase activity"/>
    <property type="evidence" value="ECO:0007669"/>
    <property type="project" value="UniProtKB-UniRule"/>
</dbReference>
<dbReference type="GO" id="GO:0006436">
    <property type="term" value="P:tryptophanyl-tRNA aminoacylation"/>
    <property type="evidence" value="ECO:0007669"/>
    <property type="project" value="UniProtKB-UniRule"/>
</dbReference>
<dbReference type="CDD" id="cd00806">
    <property type="entry name" value="TrpRS_core"/>
    <property type="match status" value="1"/>
</dbReference>
<dbReference type="FunFam" id="1.10.240.10:FF:000002">
    <property type="entry name" value="Tryptophan--tRNA ligase"/>
    <property type="match status" value="1"/>
</dbReference>
<dbReference type="Gene3D" id="3.40.50.620">
    <property type="entry name" value="HUPs"/>
    <property type="match status" value="1"/>
</dbReference>
<dbReference type="Gene3D" id="1.10.240.10">
    <property type="entry name" value="Tyrosyl-Transfer RNA Synthetase"/>
    <property type="match status" value="1"/>
</dbReference>
<dbReference type="HAMAP" id="MF_00140_B">
    <property type="entry name" value="Trp_tRNA_synth_B"/>
    <property type="match status" value="1"/>
</dbReference>
<dbReference type="InterPro" id="IPR001412">
    <property type="entry name" value="aa-tRNA-synth_I_CS"/>
</dbReference>
<dbReference type="InterPro" id="IPR002305">
    <property type="entry name" value="aa-tRNA-synth_Ic"/>
</dbReference>
<dbReference type="InterPro" id="IPR014729">
    <property type="entry name" value="Rossmann-like_a/b/a_fold"/>
</dbReference>
<dbReference type="InterPro" id="IPR002306">
    <property type="entry name" value="Trp-tRNA-ligase"/>
</dbReference>
<dbReference type="InterPro" id="IPR024109">
    <property type="entry name" value="Trp-tRNA-ligase_bac-type"/>
</dbReference>
<dbReference type="InterPro" id="IPR050203">
    <property type="entry name" value="Trp-tRNA_synthetase"/>
</dbReference>
<dbReference type="NCBIfam" id="TIGR00233">
    <property type="entry name" value="trpS"/>
    <property type="match status" value="1"/>
</dbReference>
<dbReference type="PANTHER" id="PTHR43766">
    <property type="entry name" value="TRYPTOPHAN--TRNA LIGASE, MITOCHONDRIAL"/>
    <property type="match status" value="1"/>
</dbReference>
<dbReference type="PANTHER" id="PTHR43766:SF1">
    <property type="entry name" value="TRYPTOPHAN--TRNA LIGASE, MITOCHONDRIAL"/>
    <property type="match status" value="1"/>
</dbReference>
<dbReference type="Pfam" id="PF00579">
    <property type="entry name" value="tRNA-synt_1b"/>
    <property type="match status" value="1"/>
</dbReference>
<dbReference type="PRINTS" id="PR01039">
    <property type="entry name" value="TRNASYNTHTRP"/>
</dbReference>
<dbReference type="SUPFAM" id="SSF52374">
    <property type="entry name" value="Nucleotidylyl transferase"/>
    <property type="match status" value="1"/>
</dbReference>
<dbReference type="PROSITE" id="PS00178">
    <property type="entry name" value="AA_TRNA_LIGASE_I"/>
    <property type="match status" value="1"/>
</dbReference>
<reference key="1">
    <citation type="journal article" date="2002" name="DNA Res.">
        <title>Complete genome structure of the thermophilic cyanobacterium Thermosynechococcus elongatus BP-1.</title>
        <authorList>
            <person name="Nakamura Y."/>
            <person name="Kaneko T."/>
            <person name="Sato S."/>
            <person name="Ikeuchi M."/>
            <person name="Katoh H."/>
            <person name="Sasamoto S."/>
            <person name="Watanabe A."/>
            <person name="Iriguchi M."/>
            <person name="Kawashima K."/>
            <person name="Kimura T."/>
            <person name="Kishida Y."/>
            <person name="Kiyokawa C."/>
            <person name="Kohara M."/>
            <person name="Matsumoto M."/>
            <person name="Matsuno A."/>
            <person name="Nakazaki N."/>
            <person name="Shimpo S."/>
            <person name="Sugimoto M."/>
            <person name="Takeuchi C."/>
            <person name="Yamada M."/>
            <person name="Tabata S."/>
        </authorList>
    </citation>
    <scope>NUCLEOTIDE SEQUENCE [LARGE SCALE GENOMIC DNA]</scope>
    <source>
        <strain>NIES-2133 / IAM M-273 / BP-1</strain>
    </source>
</reference>
<proteinExistence type="inferred from homology"/>
<gene>
    <name evidence="1" type="primary">trpS</name>
    <name type="ordered locus">tlr1996</name>
</gene>
<sequence>MLSGVQPTGSLHLGNYLGAIRNWVAGQAEYENYFCVVDLHAITVPHDPAELAANTYTVAALYLACGIDPAHATIFVQSHVSAHAELTWLLNCITPLNWLEDMIQFKEKAVKQGENVAAGLLDYPVLMAADILLYDADLVPVGEDQKQHLELTRDIAARVNYLFARNQPPILKLPEPLIPKAGARVMSLTDGTKKMSKSDPSELSRINLLDSPDEIRKKIKRCKTDPIRGLAFDDPDRPEANNLLSLYQVLTGKTKEAVAAECADMGWGQFKPLLTDAVIATLEPIQQRYNEIMADPSYLKDLLKKGQEQAATVANATLERVKLAFGFTLP</sequence>
<accession>Q8DHG3</accession>
<name>SYW_THEVB</name>
<protein>
    <recommendedName>
        <fullName evidence="1">Tryptophan--tRNA ligase</fullName>
        <ecNumber evidence="1">6.1.1.2</ecNumber>
    </recommendedName>
    <alternativeName>
        <fullName evidence="1">Tryptophanyl-tRNA synthetase</fullName>
        <shortName evidence="1">TrpRS</shortName>
    </alternativeName>
</protein>
<evidence type="ECO:0000255" key="1">
    <source>
        <dbReference type="HAMAP-Rule" id="MF_00140"/>
    </source>
</evidence>